<name>MURG_SYNSC</name>
<reference key="1">
    <citation type="submission" date="2005-07" db="EMBL/GenBank/DDBJ databases">
        <title>Complete sequence of Synechococcus sp. CC9605.</title>
        <authorList>
            <consortium name="US DOE Joint Genome Institute"/>
            <person name="Copeland A."/>
            <person name="Lucas S."/>
            <person name="Lapidus A."/>
            <person name="Barry K."/>
            <person name="Detter J.C."/>
            <person name="Glavina T."/>
            <person name="Hammon N."/>
            <person name="Israni S."/>
            <person name="Pitluck S."/>
            <person name="Schmutz J."/>
            <person name="Martinez M."/>
            <person name="Larimer F."/>
            <person name="Land M."/>
            <person name="Kyrpides N."/>
            <person name="Ivanova N."/>
            <person name="Richardson P."/>
        </authorList>
    </citation>
    <scope>NUCLEOTIDE SEQUENCE [LARGE SCALE GENOMIC DNA]</scope>
    <source>
        <strain>CC9605</strain>
    </source>
</reference>
<dbReference type="EC" id="2.4.1.227" evidence="1"/>
<dbReference type="EMBL" id="CP000110">
    <property type="protein sequence ID" value="ABB36195.1"/>
    <property type="molecule type" value="Genomic_DNA"/>
</dbReference>
<dbReference type="RefSeq" id="WP_011365391.1">
    <property type="nucleotide sequence ID" value="NC_007516.1"/>
</dbReference>
<dbReference type="SMR" id="Q3AGT7"/>
<dbReference type="STRING" id="110662.Syncc9605_2463"/>
<dbReference type="CAZy" id="GT28">
    <property type="family name" value="Glycosyltransferase Family 28"/>
</dbReference>
<dbReference type="KEGG" id="syd:Syncc9605_2463"/>
<dbReference type="eggNOG" id="COG0707">
    <property type="taxonomic scope" value="Bacteria"/>
</dbReference>
<dbReference type="HOGENOM" id="CLU_037404_2_1_3"/>
<dbReference type="OrthoDB" id="9808936at2"/>
<dbReference type="UniPathway" id="UPA00219"/>
<dbReference type="GO" id="GO:0005886">
    <property type="term" value="C:plasma membrane"/>
    <property type="evidence" value="ECO:0007669"/>
    <property type="project" value="UniProtKB-SubCell"/>
</dbReference>
<dbReference type="GO" id="GO:0051991">
    <property type="term" value="F:UDP-N-acetyl-D-glucosamine:N-acetylmuramoyl-L-alanyl-D-glutamyl-meso-2,6-diaminopimelyl-D-alanyl-D-alanine-diphosphoundecaprenol 4-beta-N-acetylglucosaminlytransferase activity"/>
    <property type="evidence" value="ECO:0007669"/>
    <property type="project" value="RHEA"/>
</dbReference>
<dbReference type="GO" id="GO:0050511">
    <property type="term" value="F:undecaprenyldiphospho-muramoylpentapeptide beta-N-acetylglucosaminyltransferase activity"/>
    <property type="evidence" value="ECO:0007669"/>
    <property type="project" value="UniProtKB-UniRule"/>
</dbReference>
<dbReference type="GO" id="GO:0005975">
    <property type="term" value="P:carbohydrate metabolic process"/>
    <property type="evidence" value="ECO:0007669"/>
    <property type="project" value="InterPro"/>
</dbReference>
<dbReference type="GO" id="GO:0051301">
    <property type="term" value="P:cell division"/>
    <property type="evidence" value="ECO:0007669"/>
    <property type="project" value="UniProtKB-KW"/>
</dbReference>
<dbReference type="GO" id="GO:0071555">
    <property type="term" value="P:cell wall organization"/>
    <property type="evidence" value="ECO:0007669"/>
    <property type="project" value="UniProtKB-KW"/>
</dbReference>
<dbReference type="GO" id="GO:0030259">
    <property type="term" value="P:lipid glycosylation"/>
    <property type="evidence" value="ECO:0007669"/>
    <property type="project" value="UniProtKB-UniRule"/>
</dbReference>
<dbReference type="GO" id="GO:0009252">
    <property type="term" value="P:peptidoglycan biosynthetic process"/>
    <property type="evidence" value="ECO:0007669"/>
    <property type="project" value="UniProtKB-UniRule"/>
</dbReference>
<dbReference type="GO" id="GO:0008360">
    <property type="term" value="P:regulation of cell shape"/>
    <property type="evidence" value="ECO:0007669"/>
    <property type="project" value="UniProtKB-KW"/>
</dbReference>
<dbReference type="CDD" id="cd03785">
    <property type="entry name" value="GT28_MurG"/>
    <property type="match status" value="1"/>
</dbReference>
<dbReference type="Gene3D" id="3.40.50.2000">
    <property type="entry name" value="Glycogen Phosphorylase B"/>
    <property type="match status" value="2"/>
</dbReference>
<dbReference type="HAMAP" id="MF_00033">
    <property type="entry name" value="MurG"/>
    <property type="match status" value="1"/>
</dbReference>
<dbReference type="InterPro" id="IPR006009">
    <property type="entry name" value="GlcNAc_MurG"/>
</dbReference>
<dbReference type="InterPro" id="IPR007235">
    <property type="entry name" value="Glyco_trans_28_C"/>
</dbReference>
<dbReference type="InterPro" id="IPR004276">
    <property type="entry name" value="GlycoTrans_28_N"/>
</dbReference>
<dbReference type="PANTHER" id="PTHR21015:SF22">
    <property type="entry name" value="GLYCOSYLTRANSFERASE"/>
    <property type="match status" value="1"/>
</dbReference>
<dbReference type="PANTHER" id="PTHR21015">
    <property type="entry name" value="UDP-N-ACETYLGLUCOSAMINE--N-ACETYLMURAMYL-(PENTAPEPTIDE) PYROPHOSPHORYL-UNDECAPRENOL N-ACETYLGLUCOSAMINE TRANSFERASE 1"/>
    <property type="match status" value="1"/>
</dbReference>
<dbReference type="Pfam" id="PF04101">
    <property type="entry name" value="Glyco_tran_28_C"/>
    <property type="match status" value="1"/>
</dbReference>
<dbReference type="Pfam" id="PF03033">
    <property type="entry name" value="Glyco_transf_28"/>
    <property type="match status" value="1"/>
</dbReference>
<dbReference type="SUPFAM" id="SSF53756">
    <property type="entry name" value="UDP-Glycosyltransferase/glycogen phosphorylase"/>
    <property type="match status" value="1"/>
</dbReference>
<proteinExistence type="inferred from homology"/>
<accession>Q3AGT7</accession>
<gene>
    <name evidence="1" type="primary">murG</name>
    <name type="ordered locus">Syncc9605_2463</name>
</gene>
<feature type="chain" id="PRO_0000315188" description="UDP-N-acetylglucosamine--N-acetylmuramyl-(pentapeptide) pyrophosphoryl-undecaprenol N-acetylglucosamine transferase">
    <location>
        <begin position="1"/>
        <end position="358"/>
    </location>
</feature>
<feature type="binding site" evidence="1">
    <location>
        <begin position="11"/>
        <end position="13"/>
    </location>
    <ligand>
        <name>UDP-N-acetyl-alpha-D-glucosamine</name>
        <dbReference type="ChEBI" id="CHEBI:57705"/>
    </ligand>
</feature>
<feature type="binding site" evidence="1">
    <location>
        <position position="120"/>
    </location>
    <ligand>
        <name>UDP-N-acetyl-alpha-D-glucosamine</name>
        <dbReference type="ChEBI" id="CHEBI:57705"/>
    </ligand>
</feature>
<feature type="binding site" evidence="1">
    <location>
        <position position="161"/>
    </location>
    <ligand>
        <name>UDP-N-acetyl-alpha-D-glucosamine</name>
        <dbReference type="ChEBI" id="CHEBI:57705"/>
    </ligand>
</feature>
<feature type="binding site" evidence="1">
    <location>
        <position position="188"/>
    </location>
    <ligand>
        <name>UDP-N-acetyl-alpha-D-glucosamine</name>
        <dbReference type="ChEBI" id="CHEBI:57705"/>
    </ligand>
</feature>
<feature type="binding site" evidence="1">
    <location>
        <position position="282"/>
    </location>
    <ligand>
        <name>UDP-N-acetyl-alpha-D-glucosamine</name>
        <dbReference type="ChEBI" id="CHEBI:57705"/>
    </ligand>
</feature>
<sequence length="358" mass="37853">MTRLLIAASGTGGHLFPALAVAEAVEDLWLVSWVGVPDRLETQLVPERFGLVCVNAGGLQGRGLKKLLQLLRLLLASVSVRRAIRRNAIDAVFTTGGYIAAPAILAARWCCIPVVLHESNAIPGRVTRLLGRFCSAVAIGLPAAAKRIPGSQPVLTGTPVRSSFLTPQPLPSWVPHGAGPLLVVMGGSQGAVGLNRMVRAAVPTLLQQGCRVVHLTGDNDPDIEQLQHPQLVERRFSDEIPGLLQHADLAISRAGAGSISELAVCCTPAVLVPFPQAADQHQEANAACAASLGAAVIVHQHEPEQPVLLSTVQRLLAVKLEQPDSASDPLAQMREGMQALAERDAERQLAALLQTLVK</sequence>
<keyword id="KW-0131">Cell cycle</keyword>
<keyword id="KW-0132">Cell division</keyword>
<keyword id="KW-0997">Cell inner membrane</keyword>
<keyword id="KW-1003">Cell membrane</keyword>
<keyword id="KW-0133">Cell shape</keyword>
<keyword id="KW-0961">Cell wall biogenesis/degradation</keyword>
<keyword id="KW-0328">Glycosyltransferase</keyword>
<keyword id="KW-0472">Membrane</keyword>
<keyword id="KW-0573">Peptidoglycan synthesis</keyword>
<keyword id="KW-0808">Transferase</keyword>
<organism>
    <name type="scientific">Synechococcus sp. (strain CC9605)</name>
    <dbReference type="NCBI Taxonomy" id="110662"/>
    <lineage>
        <taxon>Bacteria</taxon>
        <taxon>Bacillati</taxon>
        <taxon>Cyanobacteriota</taxon>
        <taxon>Cyanophyceae</taxon>
        <taxon>Synechococcales</taxon>
        <taxon>Synechococcaceae</taxon>
        <taxon>Synechococcus</taxon>
    </lineage>
</organism>
<evidence type="ECO:0000255" key="1">
    <source>
        <dbReference type="HAMAP-Rule" id="MF_00033"/>
    </source>
</evidence>
<comment type="function">
    <text evidence="1">Cell wall formation. Catalyzes the transfer of a GlcNAc subunit on undecaprenyl-pyrophosphoryl-MurNAc-pentapeptide (lipid intermediate I) to form undecaprenyl-pyrophosphoryl-MurNAc-(pentapeptide)GlcNAc (lipid intermediate II).</text>
</comment>
<comment type="catalytic activity">
    <reaction evidence="1">
        <text>di-trans,octa-cis-undecaprenyl diphospho-N-acetyl-alpha-D-muramoyl-L-alanyl-D-glutamyl-meso-2,6-diaminopimeloyl-D-alanyl-D-alanine + UDP-N-acetyl-alpha-D-glucosamine = di-trans,octa-cis-undecaprenyl diphospho-[N-acetyl-alpha-D-glucosaminyl-(1-&gt;4)]-N-acetyl-alpha-D-muramoyl-L-alanyl-D-glutamyl-meso-2,6-diaminopimeloyl-D-alanyl-D-alanine + UDP + H(+)</text>
        <dbReference type="Rhea" id="RHEA:31227"/>
        <dbReference type="ChEBI" id="CHEBI:15378"/>
        <dbReference type="ChEBI" id="CHEBI:57705"/>
        <dbReference type="ChEBI" id="CHEBI:58223"/>
        <dbReference type="ChEBI" id="CHEBI:61387"/>
        <dbReference type="ChEBI" id="CHEBI:61388"/>
        <dbReference type="EC" id="2.4.1.227"/>
    </reaction>
</comment>
<comment type="pathway">
    <text evidence="1">Cell wall biogenesis; peptidoglycan biosynthesis.</text>
</comment>
<comment type="subcellular location">
    <subcellularLocation>
        <location evidence="1">Cell inner membrane</location>
        <topology evidence="1">Peripheral membrane protein</topology>
        <orientation evidence="1">Cytoplasmic side</orientation>
    </subcellularLocation>
</comment>
<comment type="similarity">
    <text evidence="1">Belongs to the glycosyltransferase 28 family. MurG subfamily.</text>
</comment>
<protein>
    <recommendedName>
        <fullName evidence="1">UDP-N-acetylglucosamine--N-acetylmuramyl-(pentapeptide) pyrophosphoryl-undecaprenol N-acetylglucosamine transferase</fullName>
        <ecNumber evidence="1">2.4.1.227</ecNumber>
    </recommendedName>
    <alternativeName>
        <fullName evidence="1">Undecaprenyl-PP-MurNAc-pentapeptide-UDPGlcNAc GlcNAc transferase</fullName>
    </alternativeName>
</protein>